<keyword id="KW-0028">Amino-acid biosynthesis</keyword>
<keyword id="KW-0055">Arginine biosynthesis</keyword>
<keyword id="KW-0963">Cytoplasm</keyword>
<keyword id="KW-0238">DNA-binding</keyword>
<keyword id="KW-0678">Repressor</keyword>
<keyword id="KW-0804">Transcription</keyword>
<keyword id="KW-0805">Transcription regulation</keyword>
<gene>
    <name evidence="1" type="primary">argR</name>
    <name type="ordered locus">YPDSF_3566</name>
</gene>
<name>ARGR_YERPP</name>
<proteinExistence type="inferred from homology"/>
<dbReference type="EMBL" id="CP000668">
    <property type="protein sequence ID" value="ABP41916.1"/>
    <property type="molecule type" value="Genomic_DNA"/>
</dbReference>
<dbReference type="RefSeq" id="WP_002210173.1">
    <property type="nucleotide sequence ID" value="NZ_CP009715.1"/>
</dbReference>
<dbReference type="SMR" id="A4TRK4"/>
<dbReference type="GeneID" id="57975197"/>
<dbReference type="KEGG" id="ypp:YPDSF_3566"/>
<dbReference type="PATRIC" id="fig|386656.14.peg.222"/>
<dbReference type="UniPathway" id="UPA00068"/>
<dbReference type="GO" id="GO:0005737">
    <property type="term" value="C:cytoplasm"/>
    <property type="evidence" value="ECO:0007669"/>
    <property type="project" value="UniProtKB-SubCell"/>
</dbReference>
<dbReference type="GO" id="GO:0034618">
    <property type="term" value="F:arginine binding"/>
    <property type="evidence" value="ECO:0007669"/>
    <property type="project" value="InterPro"/>
</dbReference>
<dbReference type="GO" id="GO:0003677">
    <property type="term" value="F:DNA binding"/>
    <property type="evidence" value="ECO:0007669"/>
    <property type="project" value="UniProtKB-KW"/>
</dbReference>
<dbReference type="GO" id="GO:0003700">
    <property type="term" value="F:DNA-binding transcription factor activity"/>
    <property type="evidence" value="ECO:0007669"/>
    <property type="project" value="UniProtKB-UniRule"/>
</dbReference>
<dbReference type="GO" id="GO:0006526">
    <property type="term" value="P:L-arginine biosynthetic process"/>
    <property type="evidence" value="ECO:0007669"/>
    <property type="project" value="UniProtKB-UniPathway"/>
</dbReference>
<dbReference type="GO" id="GO:0051259">
    <property type="term" value="P:protein complex oligomerization"/>
    <property type="evidence" value="ECO:0007669"/>
    <property type="project" value="InterPro"/>
</dbReference>
<dbReference type="GO" id="GO:1900079">
    <property type="term" value="P:regulation of arginine biosynthetic process"/>
    <property type="evidence" value="ECO:0007669"/>
    <property type="project" value="UniProtKB-UniRule"/>
</dbReference>
<dbReference type="FunFam" id="1.10.10.10:FF:000074">
    <property type="entry name" value="Arginine repressor"/>
    <property type="match status" value="1"/>
</dbReference>
<dbReference type="FunFam" id="3.30.1360.40:FF:000004">
    <property type="entry name" value="Arginine repressor"/>
    <property type="match status" value="1"/>
</dbReference>
<dbReference type="Gene3D" id="3.30.1360.40">
    <property type="match status" value="1"/>
</dbReference>
<dbReference type="Gene3D" id="1.10.10.10">
    <property type="entry name" value="Winged helix-like DNA-binding domain superfamily/Winged helix DNA-binding domain"/>
    <property type="match status" value="1"/>
</dbReference>
<dbReference type="HAMAP" id="MF_00173">
    <property type="entry name" value="Arg_repressor"/>
    <property type="match status" value="1"/>
</dbReference>
<dbReference type="InterPro" id="IPR001669">
    <property type="entry name" value="Arg_repress"/>
</dbReference>
<dbReference type="InterPro" id="IPR020899">
    <property type="entry name" value="Arg_repress_C"/>
</dbReference>
<dbReference type="InterPro" id="IPR036251">
    <property type="entry name" value="Arg_repress_C_sf"/>
</dbReference>
<dbReference type="InterPro" id="IPR020900">
    <property type="entry name" value="Arg_repress_DNA-bd"/>
</dbReference>
<dbReference type="InterPro" id="IPR036388">
    <property type="entry name" value="WH-like_DNA-bd_sf"/>
</dbReference>
<dbReference type="InterPro" id="IPR036390">
    <property type="entry name" value="WH_DNA-bd_sf"/>
</dbReference>
<dbReference type="NCBIfam" id="TIGR01529">
    <property type="entry name" value="argR_whole"/>
    <property type="match status" value="1"/>
</dbReference>
<dbReference type="NCBIfam" id="NF003457">
    <property type="entry name" value="PRK05066.1"/>
    <property type="match status" value="1"/>
</dbReference>
<dbReference type="PANTHER" id="PTHR34471">
    <property type="entry name" value="ARGININE REPRESSOR"/>
    <property type="match status" value="1"/>
</dbReference>
<dbReference type="PANTHER" id="PTHR34471:SF1">
    <property type="entry name" value="ARGININE REPRESSOR"/>
    <property type="match status" value="1"/>
</dbReference>
<dbReference type="Pfam" id="PF01316">
    <property type="entry name" value="Arg_repressor"/>
    <property type="match status" value="1"/>
</dbReference>
<dbReference type="Pfam" id="PF02863">
    <property type="entry name" value="Arg_repressor_C"/>
    <property type="match status" value="1"/>
</dbReference>
<dbReference type="PRINTS" id="PR01467">
    <property type="entry name" value="ARGREPRESSOR"/>
</dbReference>
<dbReference type="SUPFAM" id="SSF55252">
    <property type="entry name" value="C-terminal domain of arginine repressor"/>
    <property type="match status" value="1"/>
</dbReference>
<dbReference type="SUPFAM" id="SSF46785">
    <property type="entry name" value="Winged helix' DNA-binding domain"/>
    <property type="match status" value="1"/>
</dbReference>
<protein>
    <recommendedName>
        <fullName evidence="1">Arginine repressor</fullName>
    </recommendedName>
</protein>
<feature type="chain" id="PRO_1000023617" description="Arginine repressor">
    <location>
        <begin position="1"/>
        <end position="156"/>
    </location>
</feature>
<organism>
    <name type="scientific">Yersinia pestis (strain Pestoides F)</name>
    <dbReference type="NCBI Taxonomy" id="386656"/>
    <lineage>
        <taxon>Bacteria</taxon>
        <taxon>Pseudomonadati</taxon>
        <taxon>Pseudomonadota</taxon>
        <taxon>Gammaproteobacteria</taxon>
        <taxon>Enterobacterales</taxon>
        <taxon>Yersiniaceae</taxon>
        <taxon>Yersinia</taxon>
    </lineage>
</organism>
<sequence length="156" mass="17124">MRNPAKQEDLIKAFKALLKEEKFSSQGEIVLALQEEGFENINQSKVSRMLTKFGAVRTRNAKMEMVYCLPAELGVPTTSSPLKNLVLDVDYNDSVVVINTSPGAAQLIARLLDSLGKAEGILGSIAGDDTIFTTPARGFTVKQLHEAILRLFEQEL</sequence>
<accession>A4TRK4</accession>
<reference key="1">
    <citation type="submission" date="2007-02" db="EMBL/GenBank/DDBJ databases">
        <title>Complete sequence of chromosome of Yersinia pestis Pestoides F.</title>
        <authorList>
            <consortium name="US DOE Joint Genome Institute"/>
            <person name="Copeland A."/>
            <person name="Lucas S."/>
            <person name="Lapidus A."/>
            <person name="Barry K."/>
            <person name="Detter J.C."/>
            <person name="Glavina del Rio T."/>
            <person name="Hammon N."/>
            <person name="Israni S."/>
            <person name="Dalin E."/>
            <person name="Tice H."/>
            <person name="Pitluck S."/>
            <person name="Di Bartolo G."/>
            <person name="Chain P."/>
            <person name="Malfatti S."/>
            <person name="Shin M."/>
            <person name="Vergez L."/>
            <person name="Schmutz J."/>
            <person name="Larimer F."/>
            <person name="Land M."/>
            <person name="Hauser L."/>
            <person name="Worsham P."/>
            <person name="Chu M."/>
            <person name="Bearden S."/>
            <person name="Garcia E."/>
            <person name="Richardson P."/>
        </authorList>
    </citation>
    <scope>NUCLEOTIDE SEQUENCE [LARGE SCALE GENOMIC DNA]</scope>
    <source>
        <strain>Pestoides F</strain>
    </source>
</reference>
<evidence type="ECO:0000255" key="1">
    <source>
        <dbReference type="HAMAP-Rule" id="MF_00173"/>
    </source>
</evidence>
<comment type="function">
    <text evidence="1">Regulates arginine biosynthesis genes.</text>
</comment>
<comment type="pathway">
    <text>Amino-acid biosynthesis; L-arginine biosynthesis [regulation].</text>
</comment>
<comment type="subcellular location">
    <subcellularLocation>
        <location evidence="1">Cytoplasm</location>
    </subcellularLocation>
</comment>
<comment type="similarity">
    <text evidence="1">Belongs to the ArgR family.</text>
</comment>